<dbReference type="EMBL" id="Z00018">
    <property type="protein sequence ID" value="CAA77307.1"/>
    <property type="molecule type" value="Genomic_DNA"/>
</dbReference>
<dbReference type="PIR" id="S04666">
    <property type="entry name" value="S04666"/>
</dbReference>
<reference key="1">
    <citation type="journal article" date="1984" name="J. Mol. Biol.">
        <title>Rhodopseudomonas blastica atp operon. Nucleotide sequence and transcription.</title>
        <authorList>
            <person name="Tybulewicz V.L.J."/>
            <person name="Falk G."/>
            <person name="Walker J.E."/>
        </authorList>
    </citation>
    <scope>NUCLEOTIDE SEQUENCE [GENOMIC DNA]</scope>
</reference>
<sequence length="69" mass="7471">DPEELTSHSYKPLGSGFFGLMGNRLPVSFLDLARAHPFTGTGLHLQMQEAPCDYRHGNRFEGGAPAAKA</sequence>
<organism>
    <name type="scientific">Fuscovulum blasticum</name>
    <name type="common">Rhodobacter blasticus</name>
    <name type="synonym">Rhodopseudomonas blastica</name>
    <dbReference type="NCBI Taxonomy" id="1075"/>
    <lineage>
        <taxon>Bacteria</taxon>
        <taxon>Pseudomonadati</taxon>
        <taxon>Pseudomonadota</taxon>
        <taxon>Alphaproteobacteria</taxon>
        <taxon>Rhodobacterales</taxon>
        <taxon>Paracoccaceae</taxon>
        <taxon>Pseudogemmobacter</taxon>
    </lineage>
</organism>
<proteinExistence type="predicted"/>
<feature type="chain" id="PRO_0000066128" description="ATP synthase subunits region ORF 1">
    <location>
        <begin position="1" status="less than"/>
        <end position="69"/>
    </location>
</feature>
<feature type="non-terminal residue">
    <location>
        <position position="1"/>
    </location>
</feature>
<accession>P05443</accession>
<name>YAT1_FUSBL</name>
<protein>
    <recommendedName>
        <fullName>ATP synthase subunits region ORF 1</fullName>
    </recommendedName>
</protein>